<reference key="1">
    <citation type="journal article" date="1992" name="Genes Dev.">
        <title>The Drosophila cellularization gene nullo produces a blastoderm-specific transcript whose levels respond to the nucleocytoplasmic ratio.</title>
        <authorList>
            <person name="Rose L.S."/>
            <person name="Wieschaus E."/>
        </authorList>
    </citation>
    <scope>NUCLEOTIDE SEQUENCE [GENOMIC DNA / MRNA]</scope>
    <scope>FUNCTION</scope>
    <scope>TISSUE SPECIFICITY</scope>
    <scope>DEVELOPMENTAL STAGE</scope>
    <source>
        <tissue>Embryo</tissue>
    </source>
</reference>
<reference key="2">
    <citation type="journal article" date="2000" name="Science">
        <title>The genome sequence of Drosophila melanogaster.</title>
        <authorList>
            <person name="Adams M.D."/>
            <person name="Celniker S.E."/>
            <person name="Holt R.A."/>
            <person name="Evans C.A."/>
            <person name="Gocayne J.D."/>
            <person name="Amanatides P.G."/>
            <person name="Scherer S.E."/>
            <person name="Li P.W."/>
            <person name="Hoskins R.A."/>
            <person name="Galle R.F."/>
            <person name="George R.A."/>
            <person name="Lewis S.E."/>
            <person name="Richards S."/>
            <person name="Ashburner M."/>
            <person name="Henderson S.N."/>
            <person name="Sutton G.G."/>
            <person name="Wortman J.R."/>
            <person name="Yandell M.D."/>
            <person name="Zhang Q."/>
            <person name="Chen L.X."/>
            <person name="Brandon R.C."/>
            <person name="Rogers Y.-H.C."/>
            <person name="Blazej R.G."/>
            <person name="Champe M."/>
            <person name="Pfeiffer B.D."/>
            <person name="Wan K.H."/>
            <person name="Doyle C."/>
            <person name="Baxter E.G."/>
            <person name="Helt G."/>
            <person name="Nelson C.R."/>
            <person name="Miklos G.L.G."/>
            <person name="Abril J.F."/>
            <person name="Agbayani A."/>
            <person name="An H.-J."/>
            <person name="Andrews-Pfannkoch C."/>
            <person name="Baldwin D."/>
            <person name="Ballew R.M."/>
            <person name="Basu A."/>
            <person name="Baxendale J."/>
            <person name="Bayraktaroglu L."/>
            <person name="Beasley E.M."/>
            <person name="Beeson K.Y."/>
            <person name="Benos P.V."/>
            <person name="Berman B.P."/>
            <person name="Bhandari D."/>
            <person name="Bolshakov S."/>
            <person name="Borkova D."/>
            <person name="Botchan M.R."/>
            <person name="Bouck J."/>
            <person name="Brokstein P."/>
            <person name="Brottier P."/>
            <person name="Burtis K.C."/>
            <person name="Busam D.A."/>
            <person name="Butler H."/>
            <person name="Cadieu E."/>
            <person name="Center A."/>
            <person name="Chandra I."/>
            <person name="Cherry J.M."/>
            <person name="Cawley S."/>
            <person name="Dahlke C."/>
            <person name="Davenport L.B."/>
            <person name="Davies P."/>
            <person name="de Pablos B."/>
            <person name="Delcher A."/>
            <person name="Deng Z."/>
            <person name="Mays A.D."/>
            <person name="Dew I."/>
            <person name="Dietz S.M."/>
            <person name="Dodson K."/>
            <person name="Doup L.E."/>
            <person name="Downes M."/>
            <person name="Dugan-Rocha S."/>
            <person name="Dunkov B.C."/>
            <person name="Dunn P."/>
            <person name="Durbin K.J."/>
            <person name="Evangelista C.C."/>
            <person name="Ferraz C."/>
            <person name="Ferriera S."/>
            <person name="Fleischmann W."/>
            <person name="Fosler C."/>
            <person name="Gabrielian A.E."/>
            <person name="Garg N.S."/>
            <person name="Gelbart W.M."/>
            <person name="Glasser K."/>
            <person name="Glodek A."/>
            <person name="Gong F."/>
            <person name="Gorrell J.H."/>
            <person name="Gu Z."/>
            <person name="Guan P."/>
            <person name="Harris M."/>
            <person name="Harris N.L."/>
            <person name="Harvey D.A."/>
            <person name="Heiman T.J."/>
            <person name="Hernandez J.R."/>
            <person name="Houck J."/>
            <person name="Hostin D."/>
            <person name="Houston K.A."/>
            <person name="Howland T.J."/>
            <person name="Wei M.-H."/>
            <person name="Ibegwam C."/>
            <person name="Jalali M."/>
            <person name="Kalush F."/>
            <person name="Karpen G.H."/>
            <person name="Ke Z."/>
            <person name="Kennison J.A."/>
            <person name="Ketchum K.A."/>
            <person name="Kimmel B.E."/>
            <person name="Kodira C.D."/>
            <person name="Kraft C.L."/>
            <person name="Kravitz S."/>
            <person name="Kulp D."/>
            <person name="Lai Z."/>
            <person name="Lasko P."/>
            <person name="Lei Y."/>
            <person name="Levitsky A.A."/>
            <person name="Li J.H."/>
            <person name="Li Z."/>
            <person name="Liang Y."/>
            <person name="Lin X."/>
            <person name="Liu X."/>
            <person name="Mattei B."/>
            <person name="McIntosh T.C."/>
            <person name="McLeod M.P."/>
            <person name="McPherson D."/>
            <person name="Merkulov G."/>
            <person name="Milshina N.V."/>
            <person name="Mobarry C."/>
            <person name="Morris J."/>
            <person name="Moshrefi A."/>
            <person name="Mount S.M."/>
            <person name="Moy M."/>
            <person name="Murphy B."/>
            <person name="Murphy L."/>
            <person name="Muzny D.M."/>
            <person name="Nelson D.L."/>
            <person name="Nelson D.R."/>
            <person name="Nelson K.A."/>
            <person name="Nixon K."/>
            <person name="Nusskern D.R."/>
            <person name="Pacleb J.M."/>
            <person name="Palazzolo M."/>
            <person name="Pittman G.S."/>
            <person name="Pan S."/>
            <person name="Pollard J."/>
            <person name="Puri V."/>
            <person name="Reese M.G."/>
            <person name="Reinert K."/>
            <person name="Remington K."/>
            <person name="Saunders R.D.C."/>
            <person name="Scheeler F."/>
            <person name="Shen H."/>
            <person name="Shue B.C."/>
            <person name="Siden-Kiamos I."/>
            <person name="Simpson M."/>
            <person name="Skupski M.P."/>
            <person name="Smith T.J."/>
            <person name="Spier E."/>
            <person name="Spradling A.C."/>
            <person name="Stapleton M."/>
            <person name="Strong R."/>
            <person name="Sun E."/>
            <person name="Svirskas R."/>
            <person name="Tector C."/>
            <person name="Turner R."/>
            <person name="Venter E."/>
            <person name="Wang A.H."/>
            <person name="Wang X."/>
            <person name="Wang Z.-Y."/>
            <person name="Wassarman D.A."/>
            <person name="Weinstock G.M."/>
            <person name="Weissenbach J."/>
            <person name="Williams S.M."/>
            <person name="Woodage T."/>
            <person name="Worley K.C."/>
            <person name="Wu D."/>
            <person name="Yang S."/>
            <person name="Yao Q.A."/>
            <person name="Ye J."/>
            <person name="Yeh R.-F."/>
            <person name="Zaveri J.S."/>
            <person name="Zhan M."/>
            <person name="Zhang G."/>
            <person name="Zhao Q."/>
            <person name="Zheng L."/>
            <person name="Zheng X.H."/>
            <person name="Zhong F.N."/>
            <person name="Zhong W."/>
            <person name="Zhou X."/>
            <person name="Zhu S.C."/>
            <person name="Zhu X."/>
            <person name="Smith H.O."/>
            <person name="Gibbs R.A."/>
            <person name="Myers E.W."/>
            <person name="Rubin G.M."/>
            <person name="Venter J.C."/>
        </authorList>
    </citation>
    <scope>NUCLEOTIDE SEQUENCE [LARGE SCALE GENOMIC DNA]</scope>
    <source>
        <strain>Berkeley</strain>
    </source>
</reference>
<reference key="3">
    <citation type="journal article" date="2002" name="Genome Biol.">
        <title>Annotation of the Drosophila melanogaster euchromatic genome: a systematic review.</title>
        <authorList>
            <person name="Misra S."/>
            <person name="Crosby M.A."/>
            <person name="Mungall C.J."/>
            <person name="Matthews B.B."/>
            <person name="Campbell K.S."/>
            <person name="Hradecky P."/>
            <person name="Huang Y."/>
            <person name="Kaminker J.S."/>
            <person name="Millburn G.H."/>
            <person name="Prochnik S.E."/>
            <person name="Smith C.D."/>
            <person name="Tupy J.L."/>
            <person name="Whitfield E.J."/>
            <person name="Bayraktaroglu L."/>
            <person name="Berman B.P."/>
            <person name="Bettencourt B.R."/>
            <person name="Celniker S.E."/>
            <person name="de Grey A.D.N.J."/>
            <person name="Drysdale R.A."/>
            <person name="Harris N.L."/>
            <person name="Richter J."/>
            <person name="Russo S."/>
            <person name="Schroeder A.J."/>
            <person name="Shu S.Q."/>
            <person name="Stapleton M."/>
            <person name="Yamada C."/>
            <person name="Ashburner M."/>
            <person name="Gelbart W.M."/>
            <person name="Rubin G.M."/>
            <person name="Lewis S.E."/>
        </authorList>
    </citation>
    <scope>GENOME REANNOTATION</scope>
    <source>
        <strain>Berkeley</strain>
    </source>
</reference>
<reference key="4">
    <citation type="journal article" date="2002" name="Genome Biol.">
        <title>A Drosophila full-length cDNA resource.</title>
        <authorList>
            <person name="Stapleton M."/>
            <person name="Carlson J.W."/>
            <person name="Brokstein P."/>
            <person name="Yu C."/>
            <person name="Champe M."/>
            <person name="George R.A."/>
            <person name="Guarin H."/>
            <person name="Kronmiller B."/>
            <person name="Pacleb J.M."/>
            <person name="Park S."/>
            <person name="Wan K.H."/>
            <person name="Rubin G.M."/>
            <person name="Celniker S.E."/>
        </authorList>
    </citation>
    <scope>NUCLEOTIDE SEQUENCE [LARGE SCALE MRNA]</scope>
    <source>
        <strain>Berkeley</strain>
        <tissue>Embryo</tissue>
    </source>
</reference>
<evidence type="ECO:0000269" key="1">
    <source>
    </source>
</evidence>
<evidence type="ECO:0000305" key="2"/>
<protein>
    <recommendedName>
        <fullName>Protein nullo</fullName>
    </recommendedName>
</protein>
<accession>P32845</accession>
<accession>Q9W3S9</accession>
<gene>
    <name type="primary">nullo</name>
    <name type="ORF">CG14426</name>
</gene>
<keyword id="KW-0217">Developmental protein</keyword>
<keyword id="KW-1185">Reference proteome</keyword>
<organism>
    <name type="scientific">Drosophila melanogaster</name>
    <name type="common">Fruit fly</name>
    <dbReference type="NCBI Taxonomy" id="7227"/>
    <lineage>
        <taxon>Eukaryota</taxon>
        <taxon>Metazoa</taxon>
        <taxon>Ecdysozoa</taxon>
        <taxon>Arthropoda</taxon>
        <taxon>Hexapoda</taxon>
        <taxon>Insecta</taxon>
        <taxon>Pterygota</taxon>
        <taxon>Neoptera</taxon>
        <taxon>Endopterygota</taxon>
        <taxon>Diptera</taxon>
        <taxon>Brachycera</taxon>
        <taxon>Muscomorpha</taxon>
        <taxon>Ephydroidea</taxon>
        <taxon>Drosophilidae</taxon>
        <taxon>Drosophila</taxon>
        <taxon>Sophophora</taxon>
    </lineage>
</organism>
<dbReference type="EMBL" id="X65444">
    <property type="protein sequence ID" value="CAA46446.1"/>
    <property type="molecule type" value="Genomic_DNA"/>
</dbReference>
<dbReference type="EMBL" id="AE014298">
    <property type="protein sequence ID" value="AAF46238.3"/>
    <property type="molecule type" value="Genomic_DNA"/>
</dbReference>
<dbReference type="EMBL" id="AY094877">
    <property type="protein sequence ID" value="AAM11230.1"/>
    <property type="molecule type" value="mRNA"/>
</dbReference>
<dbReference type="PIR" id="A46237">
    <property type="entry name" value="A46237"/>
</dbReference>
<dbReference type="RefSeq" id="NP_511067.3">
    <property type="nucleotide sequence ID" value="NM_078512.5"/>
</dbReference>
<dbReference type="SMR" id="P32845"/>
<dbReference type="STRING" id="7227.FBpp0288840"/>
<dbReference type="PaxDb" id="7227-FBpp0288840"/>
<dbReference type="EnsemblMetazoa" id="FBtr0299565">
    <property type="protein sequence ID" value="FBpp0288840"/>
    <property type="gene ID" value="FBgn0004143"/>
</dbReference>
<dbReference type="GeneID" id="31652"/>
<dbReference type="KEGG" id="dme:Dmel_CG14426"/>
<dbReference type="UCSC" id="CG14426-RB">
    <property type="organism name" value="d. melanogaster"/>
</dbReference>
<dbReference type="AGR" id="FB:FBgn0004143"/>
<dbReference type="CTD" id="31652"/>
<dbReference type="FlyBase" id="FBgn0004143">
    <property type="gene designation" value="nullo"/>
</dbReference>
<dbReference type="VEuPathDB" id="VectorBase:FBgn0004143"/>
<dbReference type="eggNOG" id="ENOG502TBUN">
    <property type="taxonomic scope" value="Eukaryota"/>
</dbReference>
<dbReference type="HOGENOM" id="CLU_1220801_0_0_1"/>
<dbReference type="InParanoid" id="P32845"/>
<dbReference type="OMA" id="WKCSFEH"/>
<dbReference type="OrthoDB" id="8002035at2759"/>
<dbReference type="PhylomeDB" id="P32845"/>
<dbReference type="BioGRID-ORCS" id="31652">
    <property type="hits" value="0 hits in 1 CRISPR screen"/>
</dbReference>
<dbReference type="GenomeRNAi" id="31652"/>
<dbReference type="PRO" id="PR:P32845"/>
<dbReference type="Proteomes" id="UP000000803">
    <property type="component" value="Chromosome X"/>
</dbReference>
<dbReference type="Bgee" id="FBgn0004143">
    <property type="expression patterns" value="Expressed in cleaving embryo and 2 other cell types or tissues"/>
</dbReference>
<dbReference type="GO" id="GO:0005912">
    <property type="term" value="C:adherens junction"/>
    <property type="evidence" value="ECO:0000304"/>
    <property type="project" value="FlyBase"/>
</dbReference>
<dbReference type="GO" id="GO:0005911">
    <property type="term" value="C:cell-cell junction"/>
    <property type="evidence" value="ECO:0000304"/>
    <property type="project" value="FlyBase"/>
</dbReference>
<dbReference type="GO" id="GO:0007043">
    <property type="term" value="P:cell-cell junction assembly"/>
    <property type="evidence" value="ECO:0000315"/>
    <property type="project" value="FlyBase"/>
</dbReference>
<dbReference type="GO" id="GO:0007349">
    <property type="term" value="P:cellularization"/>
    <property type="evidence" value="ECO:0000304"/>
    <property type="project" value="FlyBase"/>
</dbReference>
<dbReference type="GO" id="GO:0036089">
    <property type="term" value="P:cleavage furrow formation"/>
    <property type="evidence" value="ECO:0000316"/>
    <property type="project" value="FlyBase"/>
</dbReference>
<dbReference type="GO" id="GO:0016331">
    <property type="term" value="P:morphogenesis of embryonic epithelium"/>
    <property type="evidence" value="ECO:0000315"/>
    <property type="project" value="FlyBase"/>
</dbReference>
<dbReference type="GO" id="GO:0008360">
    <property type="term" value="P:regulation of cell shape"/>
    <property type="evidence" value="ECO:0000315"/>
    <property type="project" value="FlyBase"/>
</dbReference>
<proteinExistence type="evidence at transcript level"/>
<name>NULLO_DROME</name>
<feature type="chain" id="PRO_0000057996" description="Protein nullo">
    <location>
        <begin position="1"/>
        <end position="213"/>
    </location>
</feature>
<feature type="sequence conflict" description="In Ref. 1; CAA46446." evidence="2" ref="1">
    <original>N</original>
    <variation>K</variation>
    <location>
        <position position="35"/>
    </location>
</feature>
<feature type="sequence conflict" description="In Ref. 1." evidence="2" ref="1">
    <original>V</original>
    <variation>A</variation>
    <location>
        <position position="138"/>
    </location>
</feature>
<comment type="function">
    <text evidence="1">Actin-myosin network stability during cellularization. Might be involved in increasing actin-actin interactions or membrane-to-cytoskeleton attachments. nullo together with Sry-a and bnk may provide auxiliary functions, by acting both to stabilize a large and dynamic microfilament structure and regulate its functions.</text>
</comment>
<comment type="tissue specificity">
    <text evidence="1">Blastoderm. Throughout the entire cortex of the embryo although the distribution is not uniform.</text>
</comment>
<comment type="developmental stage">
    <text evidence="1">Appears first at nuclear cell cycle 11 and disappears rapidly as cellularization begins. During cycle 14, nullo protein levels are coupled to the nucleocytoplasmic ratio.</text>
</comment>
<sequence>MGSTHSAEKVKSVEDSTSPANPGIFCTPLPGFISNIQRLVLRKLSISARKQKRLNKRSKHLLRPMPRCSSFGSCGTLLTPTKKSASNIADRRYAQWKCSFEHLAQKQPRLHDISEAMTGQTTPRGFPSHTDPKRCLMVMDSSSPESPLYDMVGGQKVRRRLSLRSHALVRRPSARQKAEQAKLDAQFQRDLRDLEDYYGGFHFAQRRERLVKV</sequence>